<dbReference type="EC" id="6.1.1.11" evidence="1"/>
<dbReference type="EMBL" id="CP000238">
    <property type="protein sequence ID" value="ABF14125.1"/>
    <property type="molecule type" value="Genomic_DNA"/>
</dbReference>
<dbReference type="RefSeq" id="WP_011520499.1">
    <property type="nucleotide sequence ID" value="NC_007984.1"/>
</dbReference>
<dbReference type="SMR" id="Q1LTE8"/>
<dbReference type="STRING" id="374463.BCI_0318"/>
<dbReference type="KEGG" id="bci:BCI_0318"/>
<dbReference type="HOGENOM" id="CLU_023797_1_1_6"/>
<dbReference type="OrthoDB" id="9804647at2"/>
<dbReference type="UniPathway" id="UPA00906">
    <property type="reaction ID" value="UER00895"/>
</dbReference>
<dbReference type="Proteomes" id="UP000002427">
    <property type="component" value="Chromosome"/>
</dbReference>
<dbReference type="GO" id="GO:0005737">
    <property type="term" value="C:cytoplasm"/>
    <property type="evidence" value="ECO:0007669"/>
    <property type="project" value="UniProtKB-SubCell"/>
</dbReference>
<dbReference type="GO" id="GO:0005524">
    <property type="term" value="F:ATP binding"/>
    <property type="evidence" value="ECO:0007669"/>
    <property type="project" value="UniProtKB-UniRule"/>
</dbReference>
<dbReference type="GO" id="GO:0004828">
    <property type="term" value="F:serine-tRNA ligase activity"/>
    <property type="evidence" value="ECO:0007669"/>
    <property type="project" value="UniProtKB-UniRule"/>
</dbReference>
<dbReference type="GO" id="GO:0016260">
    <property type="term" value="P:selenocysteine biosynthetic process"/>
    <property type="evidence" value="ECO:0007669"/>
    <property type="project" value="UniProtKB-UniRule"/>
</dbReference>
<dbReference type="GO" id="GO:0006434">
    <property type="term" value="P:seryl-tRNA aminoacylation"/>
    <property type="evidence" value="ECO:0007669"/>
    <property type="project" value="UniProtKB-UniRule"/>
</dbReference>
<dbReference type="CDD" id="cd00770">
    <property type="entry name" value="SerRS_core"/>
    <property type="match status" value="1"/>
</dbReference>
<dbReference type="Gene3D" id="3.30.930.10">
    <property type="entry name" value="Bira Bifunctional Protein, Domain 2"/>
    <property type="match status" value="1"/>
</dbReference>
<dbReference type="Gene3D" id="1.10.287.40">
    <property type="entry name" value="Serine-tRNA synthetase, tRNA binding domain"/>
    <property type="match status" value="1"/>
</dbReference>
<dbReference type="HAMAP" id="MF_00176">
    <property type="entry name" value="Ser_tRNA_synth_type1"/>
    <property type="match status" value="1"/>
</dbReference>
<dbReference type="InterPro" id="IPR002314">
    <property type="entry name" value="aa-tRNA-synt_IIb"/>
</dbReference>
<dbReference type="InterPro" id="IPR006195">
    <property type="entry name" value="aa-tRNA-synth_II"/>
</dbReference>
<dbReference type="InterPro" id="IPR045864">
    <property type="entry name" value="aa-tRNA-synth_II/BPL/LPL"/>
</dbReference>
<dbReference type="InterPro" id="IPR002317">
    <property type="entry name" value="Ser-tRNA-ligase_type_1"/>
</dbReference>
<dbReference type="InterPro" id="IPR015866">
    <property type="entry name" value="Ser-tRNA-synth_1_N"/>
</dbReference>
<dbReference type="InterPro" id="IPR042103">
    <property type="entry name" value="SerRS_1_N_sf"/>
</dbReference>
<dbReference type="InterPro" id="IPR033729">
    <property type="entry name" value="SerRS_core"/>
</dbReference>
<dbReference type="InterPro" id="IPR010978">
    <property type="entry name" value="tRNA-bd_arm"/>
</dbReference>
<dbReference type="NCBIfam" id="TIGR00414">
    <property type="entry name" value="serS"/>
    <property type="match status" value="1"/>
</dbReference>
<dbReference type="PANTHER" id="PTHR43697:SF1">
    <property type="entry name" value="SERINE--TRNA LIGASE"/>
    <property type="match status" value="1"/>
</dbReference>
<dbReference type="PANTHER" id="PTHR43697">
    <property type="entry name" value="SERYL-TRNA SYNTHETASE"/>
    <property type="match status" value="1"/>
</dbReference>
<dbReference type="Pfam" id="PF02403">
    <property type="entry name" value="Seryl_tRNA_N"/>
    <property type="match status" value="1"/>
</dbReference>
<dbReference type="Pfam" id="PF00587">
    <property type="entry name" value="tRNA-synt_2b"/>
    <property type="match status" value="1"/>
</dbReference>
<dbReference type="PIRSF" id="PIRSF001529">
    <property type="entry name" value="Ser-tRNA-synth_IIa"/>
    <property type="match status" value="1"/>
</dbReference>
<dbReference type="PRINTS" id="PR00981">
    <property type="entry name" value="TRNASYNTHSER"/>
</dbReference>
<dbReference type="SUPFAM" id="SSF55681">
    <property type="entry name" value="Class II aaRS and biotin synthetases"/>
    <property type="match status" value="1"/>
</dbReference>
<dbReference type="SUPFAM" id="SSF46589">
    <property type="entry name" value="tRNA-binding arm"/>
    <property type="match status" value="1"/>
</dbReference>
<dbReference type="PROSITE" id="PS50862">
    <property type="entry name" value="AA_TRNA_LIGASE_II"/>
    <property type="match status" value="1"/>
</dbReference>
<organism>
    <name type="scientific">Baumannia cicadellinicola subsp. Homalodisca coagulata</name>
    <dbReference type="NCBI Taxonomy" id="374463"/>
    <lineage>
        <taxon>Bacteria</taxon>
        <taxon>Pseudomonadati</taxon>
        <taxon>Pseudomonadota</taxon>
        <taxon>Gammaproteobacteria</taxon>
        <taxon>Candidatus Palibaumannia</taxon>
    </lineage>
</organism>
<evidence type="ECO:0000255" key="1">
    <source>
        <dbReference type="HAMAP-Rule" id="MF_00176"/>
    </source>
</evidence>
<protein>
    <recommendedName>
        <fullName evidence="1">Serine--tRNA ligase</fullName>
        <ecNumber evidence="1">6.1.1.11</ecNumber>
    </recommendedName>
    <alternativeName>
        <fullName evidence="1">Seryl-tRNA synthetase</fullName>
        <shortName evidence="1">SerRS</shortName>
    </alternativeName>
    <alternativeName>
        <fullName evidence="1">Seryl-tRNA(Ser/Sec) synthetase</fullName>
    </alternativeName>
</protein>
<name>SYS_BAUCH</name>
<feature type="chain" id="PRO_1000019618" description="Serine--tRNA ligase">
    <location>
        <begin position="1"/>
        <end position="430"/>
    </location>
</feature>
<feature type="binding site" evidence="1">
    <location>
        <begin position="237"/>
        <end position="239"/>
    </location>
    <ligand>
        <name>L-serine</name>
        <dbReference type="ChEBI" id="CHEBI:33384"/>
    </ligand>
</feature>
<feature type="binding site" evidence="1">
    <location>
        <begin position="268"/>
        <end position="270"/>
    </location>
    <ligand>
        <name>ATP</name>
        <dbReference type="ChEBI" id="CHEBI:30616"/>
    </ligand>
</feature>
<feature type="binding site" evidence="1">
    <location>
        <position position="291"/>
    </location>
    <ligand>
        <name>L-serine</name>
        <dbReference type="ChEBI" id="CHEBI:33384"/>
    </ligand>
</feature>
<feature type="binding site" evidence="1">
    <location>
        <begin position="355"/>
        <end position="358"/>
    </location>
    <ligand>
        <name>ATP</name>
        <dbReference type="ChEBI" id="CHEBI:30616"/>
    </ligand>
</feature>
<feature type="binding site" evidence="1">
    <location>
        <position position="391"/>
    </location>
    <ligand>
        <name>L-serine</name>
        <dbReference type="ChEBI" id="CHEBI:33384"/>
    </ligand>
</feature>
<proteinExistence type="inferred from homology"/>
<comment type="function">
    <text evidence="1">Catalyzes the attachment of serine to tRNA(Ser). Is also able to aminoacylate tRNA(Sec) with serine, to form the misacylated tRNA L-seryl-tRNA(Sec), which will be further converted into selenocysteinyl-tRNA(Sec).</text>
</comment>
<comment type="catalytic activity">
    <reaction evidence="1">
        <text>tRNA(Ser) + L-serine + ATP = L-seryl-tRNA(Ser) + AMP + diphosphate + H(+)</text>
        <dbReference type="Rhea" id="RHEA:12292"/>
        <dbReference type="Rhea" id="RHEA-COMP:9669"/>
        <dbReference type="Rhea" id="RHEA-COMP:9703"/>
        <dbReference type="ChEBI" id="CHEBI:15378"/>
        <dbReference type="ChEBI" id="CHEBI:30616"/>
        <dbReference type="ChEBI" id="CHEBI:33019"/>
        <dbReference type="ChEBI" id="CHEBI:33384"/>
        <dbReference type="ChEBI" id="CHEBI:78442"/>
        <dbReference type="ChEBI" id="CHEBI:78533"/>
        <dbReference type="ChEBI" id="CHEBI:456215"/>
        <dbReference type="EC" id="6.1.1.11"/>
    </reaction>
</comment>
<comment type="catalytic activity">
    <reaction evidence="1">
        <text>tRNA(Sec) + L-serine + ATP = L-seryl-tRNA(Sec) + AMP + diphosphate + H(+)</text>
        <dbReference type="Rhea" id="RHEA:42580"/>
        <dbReference type="Rhea" id="RHEA-COMP:9742"/>
        <dbReference type="Rhea" id="RHEA-COMP:10128"/>
        <dbReference type="ChEBI" id="CHEBI:15378"/>
        <dbReference type="ChEBI" id="CHEBI:30616"/>
        <dbReference type="ChEBI" id="CHEBI:33019"/>
        <dbReference type="ChEBI" id="CHEBI:33384"/>
        <dbReference type="ChEBI" id="CHEBI:78442"/>
        <dbReference type="ChEBI" id="CHEBI:78533"/>
        <dbReference type="ChEBI" id="CHEBI:456215"/>
        <dbReference type="EC" id="6.1.1.11"/>
    </reaction>
</comment>
<comment type="pathway">
    <text evidence="1">Aminoacyl-tRNA biosynthesis; selenocysteinyl-tRNA(Sec) biosynthesis; L-seryl-tRNA(Sec) from L-serine and tRNA(Sec): step 1/1.</text>
</comment>
<comment type="subunit">
    <text evidence="1">Homodimer. The tRNA molecule binds across the dimer.</text>
</comment>
<comment type="subcellular location">
    <subcellularLocation>
        <location evidence="1">Cytoplasm</location>
    </subcellularLocation>
</comment>
<comment type="domain">
    <text evidence="1">Consists of two distinct domains, a catalytic core and a N-terminal extension that is involved in tRNA binding.</text>
</comment>
<comment type="similarity">
    <text evidence="1">Belongs to the class-II aminoacyl-tRNA synthetase family. Type-1 seryl-tRNA synthetase subfamily.</text>
</comment>
<keyword id="KW-0030">Aminoacyl-tRNA synthetase</keyword>
<keyword id="KW-0067">ATP-binding</keyword>
<keyword id="KW-0963">Cytoplasm</keyword>
<keyword id="KW-0436">Ligase</keyword>
<keyword id="KW-0547">Nucleotide-binding</keyword>
<keyword id="KW-0648">Protein biosynthesis</keyword>
<keyword id="KW-1185">Reference proteome</keyword>
<gene>
    <name evidence="1" type="primary">serS</name>
    <name type="ordered locus">BCI_0318</name>
</gene>
<reference key="1">
    <citation type="journal article" date="2006" name="PLoS Biol.">
        <title>Metabolic complementarity and genomics of the dual bacterial symbiosis of sharpshooters.</title>
        <authorList>
            <person name="Wu D."/>
            <person name="Daugherty S.C."/>
            <person name="Van Aken S.E."/>
            <person name="Pai G.H."/>
            <person name="Watkins K.L."/>
            <person name="Khouri H."/>
            <person name="Tallon L.J."/>
            <person name="Zaborsky J.M."/>
            <person name="Dunbar H.E."/>
            <person name="Tran P.L."/>
            <person name="Moran N.A."/>
            <person name="Eisen J.A."/>
        </authorList>
    </citation>
    <scope>NUCLEOTIDE SEQUENCE [LARGE SCALE GENOMIC DNA]</scope>
</reference>
<accession>Q1LTE8</accession>
<sequence>MLDPYLLRHDIKIVAKKLASKNFLLAVDKVNQQEALRKQLQIKKEHLQFIRKSKSRIVNLAKANGENITILCQEINQINEQLKQTKSELSSLKQLINDYMLLLPNIPADDVPYGSDKKDNIEIKRWGEPRKYNFPIKDHVNLGYITGNIDFTAGVKLAGTRFVVIRGQIARLYRALSQFMLDLHTQQHGYEEYYLPYLVNRTSLYGTGHLPKFYEDLFHIQSINKENISNIYTLIPTAEVPLINLLRDKIFDENILPLKMTANTPCFRAEAGSYGRDTHGLIRMHQFDKVEMVQAIKPEHSMIALEEMTKHAEKVLQLLNLHYRKVLLCTGDTGFASSKTYDLEVWLPSQNIYCEVSSCSNTSDFQTRRVLARYRNKKDKQLRFLHTINGSGLAIGRTLIAILENYQLADGRIEVPKSLRSYMQGLTILG</sequence>